<sequence length="291" mass="31093">MKRIVLFLATNLAIVLVLSLTMRLLGVEPYLTANGLNLTSLLIFAAVMGFGGSLISLAISKWMAKKSMGVQVIETPANSTEFWLVETVRKYADDAGIGMPEVGIFPSPEVNAFATGMNKNNALVAVSAGLLSTMTRAEAEAVIGHEVAHVANGDMVTLALIQGVVNTFVMFLSRIIGHTVDRVVFKNEEGHGPAFFVTMIVAELVLGILASIIVMWFSRQREFRADRGGASLAGKGAMIAALERLRSLHPHPLPDKMAAFGIAGGGAAGLKRLFMTHPPLEERIAALRAVQ</sequence>
<comment type="cofactor">
    <cofactor evidence="1">
        <name>Zn(2+)</name>
        <dbReference type="ChEBI" id="CHEBI:29105"/>
    </cofactor>
    <text evidence="1">Binds 1 zinc ion per subunit.</text>
</comment>
<comment type="subcellular location">
    <subcellularLocation>
        <location evidence="1">Cell inner membrane</location>
        <topology evidence="1">Multi-pass membrane protein</topology>
    </subcellularLocation>
</comment>
<comment type="similarity">
    <text evidence="1">Belongs to the peptidase M48B family.</text>
</comment>
<proteinExistence type="inferred from homology"/>
<organism>
    <name type="scientific">Thiobacillus denitrificans (strain ATCC 25259 / T1)</name>
    <dbReference type="NCBI Taxonomy" id="292415"/>
    <lineage>
        <taxon>Bacteria</taxon>
        <taxon>Pseudomonadati</taxon>
        <taxon>Pseudomonadota</taxon>
        <taxon>Betaproteobacteria</taxon>
        <taxon>Nitrosomonadales</taxon>
        <taxon>Thiobacillaceae</taxon>
        <taxon>Thiobacillus</taxon>
    </lineage>
</organism>
<feature type="chain" id="PRO_1000020962" description="Protease HtpX homolog">
    <location>
        <begin position="1"/>
        <end position="291"/>
    </location>
</feature>
<feature type="transmembrane region" description="Helical" evidence="1">
    <location>
        <begin position="4"/>
        <end position="24"/>
    </location>
</feature>
<feature type="transmembrane region" description="Helical" evidence="1">
    <location>
        <begin position="39"/>
        <end position="59"/>
    </location>
</feature>
<feature type="transmembrane region" description="Helical" evidence="1">
    <location>
        <begin position="156"/>
        <end position="176"/>
    </location>
</feature>
<feature type="transmembrane region" description="Helical" evidence="1">
    <location>
        <begin position="195"/>
        <end position="215"/>
    </location>
</feature>
<feature type="active site" evidence="1">
    <location>
        <position position="146"/>
    </location>
</feature>
<feature type="binding site" evidence="1">
    <location>
        <position position="145"/>
    </location>
    <ligand>
        <name>Zn(2+)</name>
        <dbReference type="ChEBI" id="CHEBI:29105"/>
        <note>catalytic</note>
    </ligand>
</feature>
<feature type="binding site" evidence="1">
    <location>
        <position position="149"/>
    </location>
    <ligand>
        <name>Zn(2+)</name>
        <dbReference type="ChEBI" id="CHEBI:29105"/>
        <note>catalytic</note>
    </ligand>
</feature>
<feature type="binding site" evidence="1">
    <location>
        <position position="222"/>
    </location>
    <ligand>
        <name>Zn(2+)</name>
        <dbReference type="ChEBI" id="CHEBI:29105"/>
        <note>catalytic</note>
    </ligand>
</feature>
<name>HTPX_THIDA</name>
<dbReference type="EC" id="3.4.24.-" evidence="1"/>
<dbReference type="EMBL" id="CP000116">
    <property type="protein sequence ID" value="AAZ98556.1"/>
    <property type="molecule type" value="Genomic_DNA"/>
</dbReference>
<dbReference type="RefSeq" id="WP_011313115.1">
    <property type="nucleotide sequence ID" value="NC_007404.1"/>
</dbReference>
<dbReference type="SMR" id="Q3SFQ0"/>
<dbReference type="STRING" id="292415.Tbd_2603"/>
<dbReference type="MEROPS" id="M48.002"/>
<dbReference type="KEGG" id="tbd:Tbd_2603"/>
<dbReference type="eggNOG" id="COG0501">
    <property type="taxonomic scope" value="Bacteria"/>
</dbReference>
<dbReference type="HOGENOM" id="CLU_042266_1_0_4"/>
<dbReference type="OrthoDB" id="15218at2"/>
<dbReference type="Proteomes" id="UP000008291">
    <property type="component" value="Chromosome"/>
</dbReference>
<dbReference type="GO" id="GO:0005886">
    <property type="term" value="C:plasma membrane"/>
    <property type="evidence" value="ECO:0007669"/>
    <property type="project" value="UniProtKB-SubCell"/>
</dbReference>
<dbReference type="GO" id="GO:0004222">
    <property type="term" value="F:metalloendopeptidase activity"/>
    <property type="evidence" value="ECO:0007669"/>
    <property type="project" value="UniProtKB-UniRule"/>
</dbReference>
<dbReference type="GO" id="GO:0008270">
    <property type="term" value="F:zinc ion binding"/>
    <property type="evidence" value="ECO:0007669"/>
    <property type="project" value="UniProtKB-UniRule"/>
</dbReference>
<dbReference type="GO" id="GO:0006508">
    <property type="term" value="P:proteolysis"/>
    <property type="evidence" value="ECO:0007669"/>
    <property type="project" value="UniProtKB-KW"/>
</dbReference>
<dbReference type="CDD" id="cd07335">
    <property type="entry name" value="M48B_HtpX_like"/>
    <property type="match status" value="1"/>
</dbReference>
<dbReference type="Gene3D" id="3.30.2010.10">
    <property type="entry name" value="Metalloproteases ('zincins'), catalytic domain"/>
    <property type="match status" value="1"/>
</dbReference>
<dbReference type="HAMAP" id="MF_00188">
    <property type="entry name" value="Pept_M48_protease_HtpX"/>
    <property type="match status" value="1"/>
</dbReference>
<dbReference type="InterPro" id="IPR050083">
    <property type="entry name" value="HtpX_protease"/>
</dbReference>
<dbReference type="InterPro" id="IPR022919">
    <property type="entry name" value="Pept_M48_protease_HtpX"/>
</dbReference>
<dbReference type="InterPro" id="IPR001915">
    <property type="entry name" value="Peptidase_M48"/>
</dbReference>
<dbReference type="NCBIfam" id="NF003965">
    <property type="entry name" value="PRK05457.1"/>
    <property type="match status" value="1"/>
</dbReference>
<dbReference type="PANTHER" id="PTHR43221">
    <property type="entry name" value="PROTEASE HTPX"/>
    <property type="match status" value="1"/>
</dbReference>
<dbReference type="PANTHER" id="PTHR43221:SF1">
    <property type="entry name" value="PROTEASE HTPX"/>
    <property type="match status" value="1"/>
</dbReference>
<dbReference type="Pfam" id="PF01435">
    <property type="entry name" value="Peptidase_M48"/>
    <property type="match status" value="1"/>
</dbReference>
<gene>
    <name evidence="1" type="primary">htpX</name>
    <name type="ordered locus">Tbd_2603</name>
</gene>
<keyword id="KW-0997">Cell inner membrane</keyword>
<keyword id="KW-1003">Cell membrane</keyword>
<keyword id="KW-0378">Hydrolase</keyword>
<keyword id="KW-0472">Membrane</keyword>
<keyword id="KW-0479">Metal-binding</keyword>
<keyword id="KW-0482">Metalloprotease</keyword>
<keyword id="KW-0645">Protease</keyword>
<keyword id="KW-1185">Reference proteome</keyword>
<keyword id="KW-0812">Transmembrane</keyword>
<keyword id="KW-1133">Transmembrane helix</keyword>
<keyword id="KW-0862">Zinc</keyword>
<evidence type="ECO:0000255" key="1">
    <source>
        <dbReference type="HAMAP-Rule" id="MF_00188"/>
    </source>
</evidence>
<accession>Q3SFQ0</accession>
<reference key="1">
    <citation type="journal article" date="2006" name="J. Bacteriol.">
        <title>The genome sequence of the obligately chemolithoautotrophic, facultatively anaerobic bacterium Thiobacillus denitrificans.</title>
        <authorList>
            <person name="Beller H.R."/>
            <person name="Chain P.S."/>
            <person name="Letain T.E."/>
            <person name="Chakicherla A."/>
            <person name="Larimer F.W."/>
            <person name="Richardson P.M."/>
            <person name="Coleman M.A."/>
            <person name="Wood A.P."/>
            <person name="Kelly D.P."/>
        </authorList>
    </citation>
    <scope>NUCLEOTIDE SEQUENCE [LARGE SCALE GENOMIC DNA]</scope>
    <source>
        <strain>ATCC 25259 / T1</strain>
    </source>
</reference>
<protein>
    <recommendedName>
        <fullName evidence="1">Protease HtpX homolog</fullName>
        <ecNumber evidence="1">3.4.24.-</ecNumber>
    </recommendedName>
</protein>